<protein>
    <recommendedName>
        <fullName evidence="1">Argininosuccinate lyase</fullName>
        <shortName evidence="1">ASAL</shortName>
        <ecNumber evidence="1">4.3.2.1</ecNumber>
    </recommendedName>
    <alternativeName>
        <fullName evidence="1">Arginosuccinase</fullName>
    </alternativeName>
</protein>
<proteinExistence type="inferred from homology"/>
<dbReference type="EC" id="4.3.2.1" evidence="1"/>
<dbReference type="EMBL" id="AM933173">
    <property type="protein sequence ID" value="CAR39088.1"/>
    <property type="molecule type" value="Genomic_DNA"/>
</dbReference>
<dbReference type="RefSeq" id="WP_001230062.1">
    <property type="nucleotide sequence ID" value="NC_011274.1"/>
</dbReference>
<dbReference type="SMR" id="B5RF45"/>
<dbReference type="KEGG" id="seg:SG3292"/>
<dbReference type="HOGENOM" id="CLU_027272_2_3_6"/>
<dbReference type="UniPathway" id="UPA00068">
    <property type="reaction ID" value="UER00114"/>
</dbReference>
<dbReference type="Proteomes" id="UP000008321">
    <property type="component" value="Chromosome"/>
</dbReference>
<dbReference type="GO" id="GO:0005829">
    <property type="term" value="C:cytosol"/>
    <property type="evidence" value="ECO:0007669"/>
    <property type="project" value="TreeGrafter"/>
</dbReference>
<dbReference type="GO" id="GO:0004056">
    <property type="term" value="F:argininosuccinate lyase activity"/>
    <property type="evidence" value="ECO:0007669"/>
    <property type="project" value="UniProtKB-UniRule"/>
</dbReference>
<dbReference type="GO" id="GO:0042450">
    <property type="term" value="P:arginine biosynthetic process via ornithine"/>
    <property type="evidence" value="ECO:0007669"/>
    <property type="project" value="InterPro"/>
</dbReference>
<dbReference type="GO" id="GO:0006526">
    <property type="term" value="P:L-arginine biosynthetic process"/>
    <property type="evidence" value="ECO:0007669"/>
    <property type="project" value="UniProtKB-UniRule"/>
</dbReference>
<dbReference type="CDD" id="cd01359">
    <property type="entry name" value="Argininosuccinate_lyase"/>
    <property type="match status" value="1"/>
</dbReference>
<dbReference type="FunFam" id="1.10.275.10:FF:000004">
    <property type="entry name" value="Argininosuccinate lyase"/>
    <property type="match status" value="1"/>
</dbReference>
<dbReference type="FunFam" id="1.10.40.30:FF:000001">
    <property type="entry name" value="Argininosuccinate lyase"/>
    <property type="match status" value="1"/>
</dbReference>
<dbReference type="FunFam" id="1.20.200.10:FF:000006">
    <property type="entry name" value="Argininosuccinate lyase"/>
    <property type="match status" value="1"/>
</dbReference>
<dbReference type="Gene3D" id="1.10.40.30">
    <property type="entry name" value="Fumarase/aspartase (C-terminal domain)"/>
    <property type="match status" value="1"/>
</dbReference>
<dbReference type="Gene3D" id="1.20.200.10">
    <property type="entry name" value="Fumarase/aspartase (Central domain)"/>
    <property type="match status" value="1"/>
</dbReference>
<dbReference type="Gene3D" id="1.10.275.10">
    <property type="entry name" value="Fumarase/aspartase (N-terminal domain)"/>
    <property type="match status" value="1"/>
</dbReference>
<dbReference type="HAMAP" id="MF_00006">
    <property type="entry name" value="Arg_succ_lyase"/>
    <property type="match status" value="1"/>
</dbReference>
<dbReference type="InterPro" id="IPR029419">
    <property type="entry name" value="Arg_succ_lyase_C"/>
</dbReference>
<dbReference type="InterPro" id="IPR009049">
    <property type="entry name" value="Argininosuccinate_lyase"/>
</dbReference>
<dbReference type="InterPro" id="IPR024083">
    <property type="entry name" value="Fumarase/histidase_N"/>
</dbReference>
<dbReference type="InterPro" id="IPR020557">
    <property type="entry name" value="Fumarate_lyase_CS"/>
</dbReference>
<dbReference type="InterPro" id="IPR000362">
    <property type="entry name" value="Fumarate_lyase_fam"/>
</dbReference>
<dbReference type="InterPro" id="IPR022761">
    <property type="entry name" value="Fumarate_lyase_N"/>
</dbReference>
<dbReference type="InterPro" id="IPR008948">
    <property type="entry name" value="L-Aspartase-like"/>
</dbReference>
<dbReference type="NCBIfam" id="TIGR00838">
    <property type="entry name" value="argH"/>
    <property type="match status" value="1"/>
</dbReference>
<dbReference type="NCBIfam" id="NF008964">
    <property type="entry name" value="PRK12308.1"/>
    <property type="match status" value="1"/>
</dbReference>
<dbReference type="PANTHER" id="PTHR43814">
    <property type="entry name" value="ARGININOSUCCINATE LYASE"/>
    <property type="match status" value="1"/>
</dbReference>
<dbReference type="PANTHER" id="PTHR43814:SF1">
    <property type="entry name" value="ARGININOSUCCINATE LYASE"/>
    <property type="match status" value="1"/>
</dbReference>
<dbReference type="Pfam" id="PF14698">
    <property type="entry name" value="ASL_C2"/>
    <property type="match status" value="1"/>
</dbReference>
<dbReference type="Pfam" id="PF00206">
    <property type="entry name" value="Lyase_1"/>
    <property type="match status" value="1"/>
</dbReference>
<dbReference type="PRINTS" id="PR00145">
    <property type="entry name" value="ARGSUCLYASE"/>
</dbReference>
<dbReference type="PRINTS" id="PR00149">
    <property type="entry name" value="FUMRATELYASE"/>
</dbReference>
<dbReference type="SUPFAM" id="SSF48557">
    <property type="entry name" value="L-aspartase-like"/>
    <property type="match status" value="1"/>
</dbReference>
<dbReference type="PROSITE" id="PS00163">
    <property type="entry name" value="FUMARATE_LYASES"/>
    <property type="match status" value="1"/>
</dbReference>
<reference key="1">
    <citation type="journal article" date="2008" name="Genome Res.">
        <title>Comparative genome analysis of Salmonella enteritidis PT4 and Salmonella gallinarum 287/91 provides insights into evolutionary and host adaptation pathways.</title>
        <authorList>
            <person name="Thomson N.R."/>
            <person name="Clayton D.J."/>
            <person name="Windhorst D."/>
            <person name="Vernikos G."/>
            <person name="Davidson S."/>
            <person name="Churcher C."/>
            <person name="Quail M.A."/>
            <person name="Stevens M."/>
            <person name="Jones M.A."/>
            <person name="Watson M."/>
            <person name="Barron A."/>
            <person name="Layton A."/>
            <person name="Pickard D."/>
            <person name="Kingsley R.A."/>
            <person name="Bignell A."/>
            <person name="Clark L."/>
            <person name="Harris B."/>
            <person name="Ormond D."/>
            <person name="Abdellah Z."/>
            <person name="Brooks K."/>
            <person name="Cherevach I."/>
            <person name="Chillingworth T."/>
            <person name="Woodward J."/>
            <person name="Norberczak H."/>
            <person name="Lord A."/>
            <person name="Arrowsmith C."/>
            <person name="Jagels K."/>
            <person name="Moule S."/>
            <person name="Mungall K."/>
            <person name="Saunders M."/>
            <person name="Whitehead S."/>
            <person name="Chabalgoity J.A."/>
            <person name="Maskell D."/>
            <person name="Humphreys T."/>
            <person name="Roberts M."/>
            <person name="Barrow P.A."/>
            <person name="Dougan G."/>
            <person name="Parkhill J."/>
        </authorList>
    </citation>
    <scope>NUCLEOTIDE SEQUENCE [LARGE SCALE GENOMIC DNA]</scope>
    <source>
        <strain>287/91 / NCTC 13346</strain>
    </source>
</reference>
<keyword id="KW-0028">Amino-acid biosynthesis</keyword>
<keyword id="KW-0055">Arginine biosynthesis</keyword>
<keyword id="KW-0963">Cytoplasm</keyword>
<keyword id="KW-0456">Lyase</keyword>
<evidence type="ECO:0000255" key="1">
    <source>
        <dbReference type="HAMAP-Rule" id="MF_00006"/>
    </source>
</evidence>
<sequence>MALWGGRFTQAADQRFKQFNDSLRFDYRLAEQDIVGSVAWSKALVTVGVLTADEQRQLEEALNVLLEEVRVNPQQILQSDAEDIHSWVEGKLIDKVGQLGKKLHTGRSRNDQVATDLKLWCKETVRELLTANRQLQSALVETAQANQDAVMPGYTHLQRAQPVTFAHWCLAYVEMLARDESRLQDTLKRLDVSPLGCGALAGTAYEIDREQLAGWLGFASATRNSLDSVSDRDHVLELLSDAAIGMVHLSRFAEDLIFFNSGEAGFVELSDRVTSGSSLMPQKKNPDALELIRGKCGRVQGALTGMMMTLKGLPLAYNKDMQEDKEGLFDALDTWLDCLHMAALVLDGIQVKRPRCQDAAQQGYANATELADYLVAKGVPFREAHHIVGEAVVEAIRQGKPLEALPLADLQKFSHVIGDDVYPMLSLQSCLDKRAAKGGVSPQQVAQAIDDARARLAL</sequence>
<comment type="catalytic activity">
    <reaction evidence="1">
        <text>2-(N(omega)-L-arginino)succinate = fumarate + L-arginine</text>
        <dbReference type="Rhea" id="RHEA:24020"/>
        <dbReference type="ChEBI" id="CHEBI:29806"/>
        <dbReference type="ChEBI" id="CHEBI:32682"/>
        <dbReference type="ChEBI" id="CHEBI:57472"/>
        <dbReference type="EC" id="4.3.2.1"/>
    </reaction>
</comment>
<comment type="pathway">
    <text evidence="1">Amino-acid biosynthesis; L-arginine biosynthesis; L-arginine from L-ornithine and carbamoyl phosphate: step 3/3.</text>
</comment>
<comment type="subcellular location">
    <subcellularLocation>
        <location evidence="1">Cytoplasm</location>
    </subcellularLocation>
</comment>
<comment type="similarity">
    <text evidence="1">Belongs to the lyase 1 family. Argininosuccinate lyase subfamily.</text>
</comment>
<feature type="chain" id="PRO_1000089112" description="Argininosuccinate lyase">
    <location>
        <begin position="1"/>
        <end position="458"/>
    </location>
</feature>
<accession>B5RF45</accession>
<name>ARLY_SALG2</name>
<gene>
    <name evidence="1" type="primary">argH</name>
    <name type="ordered locus">SG3292</name>
</gene>
<organism>
    <name type="scientific">Salmonella gallinarum (strain 287/91 / NCTC 13346)</name>
    <dbReference type="NCBI Taxonomy" id="550538"/>
    <lineage>
        <taxon>Bacteria</taxon>
        <taxon>Pseudomonadati</taxon>
        <taxon>Pseudomonadota</taxon>
        <taxon>Gammaproteobacteria</taxon>
        <taxon>Enterobacterales</taxon>
        <taxon>Enterobacteriaceae</taxon>
        <taxon>Salmonella</taxon>
    </lineage>
</organism>